<reference key="1">
    <citation type="journal article" date="2009" name="Nature">
        <title>Evolution of pathogenicity and sexual reproduction in eight Candida genomes.</title>
        <authorList>
            <person name="Butler G."/>
            <person name="Rasmussen M.D."/>
            <person name="Lin M.F."/>
            <person name="Santos M.A.S."/>
            <person name="Sakthikumar S."/>
            <person name="Munro C.A."/>
            <person name="Rheinbay E."/>
            <person name="Grabherr M."/>
            <person name="Forche A."/>
            <person name="Reedy J.L."/>
            <person name="Agrafioti I."/>
            <person name="Arnaud M.B."/>
            <person name="Bates S."/>
            <person name="Brown A.J.P."/>
            <person name="Brunke S."/>
            <person name="Costanzo M.C."/>
            <person name="Fitzpatrick D.A."/>
            <person name="de Groot P.W.J."/>
            <person name="Harris D."/>
            <person name="Hoyer L.L."/>
            <person name="Hube B."/>
            <person name="Klis F.M."/>
            <person name="Kodira C."/>
            <person name="Lennard N."/>
            <person name="Logue M.E."/>
            <person name="Martin R."/>
            <person name="Neiman A.M."/>
            <person name="Nikolaou E."/>
            <person name="Quail M.A."/>
            <person name="Quinn J."/>
            <person name="Santos M.C."/>
            <person name="Schmitzberger F.F."/>
            <person name="Sherlock G."/>
            <person name="Shah P."/>
            <person name="Silverstein K.A.T."/>
            <person name="Skrzypek M.S."/>
            <person name="Soll D."/>
            <person name="Staggs R."/>
            <person name="Stansfield I."/>
            <person name="Stumpf M.P.H."/>
            <person name="Sudbery P.E."/>
            <person name="Srikantha T."/>
            <person name="Zeng Q."/>
            <person name="Berman J."/>
            <person name="Berriman M."/>
            <person name="Heitman J."/>
            <person name="Gow N.A.R."/>
            <person name="Lorenz M.C."/>
            <person name="Birren B.W."/>
            <person name="Kellis M."/>
            <person name="Cuomo C.A."/>
        </authorList>
    </citation>
    <scope>NUCLEOTIDE SEQUENCE [LARGE SCALE GENOMIC DNA]</scope>
    <source>
        <strain>ATCC 6260 / CBS 566 / DSM 6381 / JCM 1539 / NBRC 10279 / NRRL Y-324</strain>
    </source>
</reference>
<dbReference type="EMBL" id="CH408155">
    <property type="protein sequence ID" value="EDK36955.2"/>
    <property type="molecule type" value="Genomic_DNA"/>
</dbReference>
<dbReference type="RefSeq" id="XP_001487676.1">
    <property type="nucleotide sequence ID" value="XM_001487626.1"/>
</dbReference>
<dbReference type="SMR" id="A5DCP8"/>
<dbReference type="FunCoup" id="A5DCP8">
    <property type="interactions" value="654"/>
</dbReference>
<dbReference type="STRING" id="294746.A5DCP8"/>
<dbReference type="GeneID" id="5128905"/>
<dbReference type="KEGG" id="pgu:PGUG_01053"/>
<dbReference type="VEuPathDB" id="FungiDB:PGUG_01053"/>
<dbReference type="eggNOG" id="KOG3741">
    <property type="taxonomic scope" value="Eukaryota"/>
</dbReference>
<dbReference type="HOGENOM" id="CLU_016423_1_0_1"/>
<dbReference type="InParanoid" id="A5DCP8"/>
<dbReference type="OMA" id="YVFHSVD"/>
<dbReference type="OrthoDB" id="204958at2759"/>
<dbReference type="Proteomes" id="UP000001997">
    <property type="component" value="Unassembled WGS sequence"/>
</dbReference>
<dbReference type="GO" id="GO:0000932">
    <property type="term" value="C:P-body"/>
    <property type="evidence" value="ECO:0007669"/>
    <property type="project" value="TreeGrafter"/>
</dbReference>
<dbReference type="GO" id="GO:0031251">
    <property type="term" value="C:PAN complex"/>
    <property type="evidence" value="ECO:0007669"/>
    <property type="project" value="UniProtKB-UniRule"/>
</dbReference>
<dbReference type="GO" id="GO:0005524">
    <property type="term" value="F:ATP binding"/>
    <property type="evidence" value="ECO:0007669"/>
    <property type="project" value="UniProtKB-UniRule"/>
</dbReference>
<dbReference type="GO" id="GO:0008143">
    <property type="term" value="F:poly(A) binding"/>
    <property type="evidence" value="ECO:0007669"/>
    <property type="project" value="TreeGrafter"/>
</dbReference>
<dbReference type="GO" id="GO:0004672">
    <property type="term" value="F:protein kinase activity"/>
    <property type="evidence" value="ECO:0007669"/>
    <property type="project" value="InterPro"/>
</dbReference>
<dbReference type="GO" id="GO:0008270">
    <property type="term" value="F:zinc ion binding"/>
    <property type="evidence" value="ECO:0007669"/>
    <property type="project" value="UniProtKB-KW"/>
</dbReference>
<dbReference type="GO" id="GO:0006397">
    <property type="term" value="P:mRNA processing"/>
    <property type="evidence" value="ECO:0007669"/>
    <property type="project" value="UniProtKB-KW"/>
</dbReference>
<dbReference type="GO" id="GO:0000289">
    <property type="term" value="P:nuclear-transcribed mRNA poly(A) tail shortening"/>
    <property type="evidence" value="ECO:0007669"/>
    <property type="project" value="UniProtKB-UniRule"/>
</dbReference>
<dbReference type="Gene3D" id="1.10.287.3700">
    <property type="match status" value="1"/>
</dbReference>
<dbReference type="Gene3D" id="6.10.250.3160">
    <property type="match status" value="1"/>
</dbReference>
<dbReference type="Gene3D" id="1.10.510.10">
    <property type="entry name" value="Transferase(Phosphotransferase) domain 1"/>
    <property type="match status" value="1"/>
</dbReference>
<dbReference type="HAMAP" id="MF_03181">
    <property type="entry name" value="PAN3"/>
    <property type="match status" value="1"/>
</dbReference>
<dbReference type="InterPro" id="IPR011009">
    <property type="entry name" value="Kinase-like_dom_sf"/>
</dbReference>
<dbReference type="InterPro" id="IPR030844">
    <property type="entry name" value="PAN3"/>
</dbReference>
<dbReference type="InterPro" id="IPR041332">
    <property type="entry name" value="Pan3_PK"/>
</dbReference>
<dbReference type="InterPro" id="IPR000719">
    <property type="entry name" value="Prot_kinase_dom"/>
</dbReference>
<dbReference type="InterPro" id="IPR000571">
    <property type="entry name" value="Znf_CCCH"/>
</dbReference>
<dbReference type="PANTHER" id="PTHR12272">
    <property type="entry name" value="DEADENYLATION COMPLEX SUBUNIT PAN3"/>
    <property type="match status" value="1"/>
</dbReference>
<dbReference type="PANTHER" id="PTHR12272:SF11">
    <property type="entry name" value="PAN2-PAN3 DEADENYLATION COMPLEX SUBUNIT PAN3"/>
    <property type="match status" value="1"/>
</dbReference>
<dbReference type="Pfam" id="PF18101">
    <property type="entry name" value="Pan3_PK"/>
    <property type="match status" value="1"/>
</dbReference>
<dbReference type="SMART" id="SM00220">
    <property type="entry name" value="S_TKc"/>
    <property type="match status" value="1"/>
</dbReference>
<dbReference type="SUPFAM" id="SSF56112">
    <property type="entry name" value="Protein kinase-like (PK-like)"/>
    <property type="match status" value="1"/>
</dbReference>
<dbReference type="PROSITE" id="PS50011">
    <property type="entry name" value="PROTEIN_KINASE_DOM"/>
    <property type="match status" value="1"/>
</dbReference>
<dbReference type="PROSITE" id="PS50103">
    <property type="entry name" value="ZF_C3H1"/>
    <property type="match status" value="1"/>
</dbReference>
<proteinExistence type="inferred from homology"/>
<protein>
    <recommendedName>
        <fullName evidence="1">PAN2-PAN3 deadenylation complex subunit PAN3</fullName>
    </recommendedName>
    <alternativeName>
        <fullName evidence="1">PAB1P-dependent poly(A)-specific ribonuclease</fullName>
    </alternativeName>
    <alternativeName>
        <fullName evidence="1">Poly(A)-nuclease deadenylation complex subunit 3</fullName>
        <shortName evidence="1">PAN deadenylation complex subunit 3</shortName>
    </alternativeName>
</protein>
<accession>A5DCP8</accession>
<keyword id="KW-0067">ATP-binding</keyword>
<keyword id="KW-0175">Coiled coil</keyword>
<keyword id="KW-0963">Cytoplasm</keyword>
<keyword id="KW-0479">Metal-binding</keyword>
<keyword id="KW-0507">mRNA processing</keyword>
<keyword id="KW-0547">Nucleotide-binding</keyword>
<keyword id="KW-1185">Reference proteome</keyword>
<keyword id="KW-0862">Zinc</keyword>
<keyword id="KW-0863">Zinc-finger</keyword>
<feature type="chain" id="PRO_0000295375" description="PAN2-PAN3 deadenylation complex subunit PAN3">
    <location>
        <begin position="1"/>
        <end position="620"/>
    </location>
</feature>
<feature type="zinc finger region" description="C3H1-type" evidence="1">
    <location>
        <begin position="7"/>
        <end position="36"/>
    </location>
</feature>
<feature type="region of interest" description="Disordered" evidence="2">
    <location>
        <begin position="39"/>
        <end position="73"/>
    </location>
</feature>
<feature type="region of interest" description="Disordered" evidence="2">
    <location>
        <begin position="95"/>
        <end position="168"/>
    </location>
</feature>
<feature type="region of interest" description="Pseudokinase domain" evidence="1">
    <location>
        <begin position="226"/>
        <end position="482"/>
    </location>
</feature>
<feature type="region of interest" description="Knob domain" evidence="1">
    <location>
        <begin position="522"/>
        <end position="620"/>
    </location>
</feature>
<feature type="coiled-coil region" evidence="1">
    <location>
        <begin position="483"/>
        <end position="521"/>
    </location>
</feature>
<feature type="compositionally biased region" description="Polar residues" evidence="2">
    <location>
        <begin position="63"/>
        <end position="73"/>
    </location>
</feature>
<feature type="compositionally biased region" description="Polar residues" evidence="2">
    <location>
        <begin position="101"/>
        <end position="126"/>
    </location>
</feature>
<feature type="binding site" evidence="1">
    <location>
        <position position="274"/>
    </location>
    <ligand>
        <name>ATP</name>
        <dbReference type="ChEBI" id="CHEBI:30616"/>
    </ligand>
</feature>
<feature type="binding site" evidence="1">
    <location>
        <begin position="323"/>
        <end position="330"/>
    </location>
    <ligand>
        <name>ATP</name>
        <dbReference type="ChEBI" id="CHEBI:30616"/>
    </ligand>
</feature>
<feature type="binding site" evidence="1">
    <location>
        <begin position="380"/>
        <end position="381"/>
    </location>
    <ligand>
        <name>ATP</name>
        <dbReference type="ChEBI" id="CHEBI:30616"/>
    </ligand>
</feature>
<name>PAN3_PICGU</name>
<organism>
    <name type="scientific">Meyerozyma guilliermondii (strain ATCC 6260 / CBS 566 / DSM 6381 / JCM 1539 / NBRC 10279 / NRRL Y-324)</name>
    <name type="common">Yeast</name>
    <name type="synonym">Candida guilliermondii</name>
    <dbReference type="NCBI Taxonomy" id="294746"/>
    <lineage>
        <taxon>Eukaryota</taxon>
        <taxon>Fungi</taxon>
        <taxon>Dikarya</taxon>
        <taxon>Ascomycota</taxon>
        <taxon>Saccharomycotina</taxon>
        <taxon>Pichiomycetes</taxon>
        <taxon>Debaryomycetaceae</taxon>
        <taxon>Meyerozyma</taxon>
    </lineage>
</organism>
<evidence type="ECO:0000255" key="1">
    <source>
        <dbReference type="HAMAP-Rule" id="MF_03181"/>
    </source>
</evidence>
<evidence type="ECO:0000256" key="2">
    <source>
        <dbReference type="SAM" id="MobiDB-lite"/>
    </source>
</evidence>
<gene>
    <name evidence="1" type="primary">PAN3</name>
    <name type="ORF">PGUG_01053</name>
</gene>
<sequence length="620" mass="68973">MNINLDSAKGTLCKNILIYGYCKYENKGCAFSHRRNNNANSGPGATPAKSVATTPTSDKRKFNVNTPSFQPSTAPVQGLANKFAGLSPKVKDIPVFVPSGTPASPAQSTPSTGNQEQPMPTSTVSNVPERKFNTSTPSFTPSQPIPAPPPQNTSSPPTNPYLMNQPGPPTDMYYQSAYPLQYHLYAPAPPPRLAITHSSHQVDAHSLFIDSELRETLQKRNEATLQSYPGGPEIVDVYHTVVPIAAEGVSKIWKVSSSVYKGVSNVDGNVYALRKIEDFKIINETPFRTIKRWHGLQSANIVKIQDAFTTVAFGSPSLVVAYDYYPNASTLLEQHVNRRLGGRLEPLTEDILWLYLTQLVNAVRTVHKKKLAARSSLDLSKIIVTTNRIRLAAIGMSDILNWEADDAEIARVGLPTYMENLQQEDIRNMARLMVDLTTVMNPVVQNDIFKLKSSGLSTDFVAAVQDLSNTDDLESYIRKHLAIRLLDVVDMLEDSNDYLESQLSTELENARLVRLMTKINFIVDRPEWDNEATAAAAGWTENGPKYLLKLFRDFVFFQTDEMGKPVTDLSRVLVTLNKLDAGIDEKFLLVSRDEKTCIVVSYKEIRDLLESVFRTITRGK</sequence>
<comment type="function">
    <text evidence="1">Regulatory subunit of the poly(A)-nuclease (PAN) deadenylation complex, one of two cytoplasmic mRNA deadenylases involved in mRNA turnover. PAN specifically shortens poly(A) tails of RNA and the activity is stimulated by poly(A)-binding protein PAB1. PAN deadenylation is followed by rapid degradation of the shortened mRNA tails by the CCR4-NOT complex. Deadenylated mRNAs are then degraded by two alternative mechanisms, namely exosome-mediated 3'-5' exonucleolytic degradation, or deadenylation-dependent mRNA decaping and subsequent 5'-3' exonucleolytic degradation by XRN1. May also be involved in post-transcriptional maturation of mRNA poly(A) tails. PAN3 acts as a positive regulator for PAN activity, recruiting the catalytic subunit PAN2 to mRNA via its interaction with RNA and with PAB1.</text>
</comment>
<comment type="subunit">
    <text evidence="1">Homodimer. Forms a heterotrimer with a catalytic subunit PAN2 to form the poly(A)-nuclease (PAN) deadenylation complex. Interacts (via PAM-2 motif) with poly(A)-binding protein PAB1 (via PABC domain), conferring substrate specificity of the enzyme complex.</text>
</comment>
<comment type="subcellular location">
    <subcellularLocation>
        <location evidence="1">Cytoplasm</location>
    </subcellularLocation>
</comment>
<comment type="domain">
    <text evidence="1">The N-terminal zinc finger binds to poly(A) RNA.</text>
</comment>
<comment type="domain">
    <text evidence="1">Contains a pseudokinase domain. The protein kinase domain is predicted to be catalytically inactive because some of the residues important for catalytic activity are substituted and it lacks the equivalent of the binding site for a peptide substrate. However, it has retained an ATP-binding site and ATP-binding is required for mRNA degradation, stimulating the activity of the PAN2 nuclease in vitro. The nucleotide-binding site is juxtaposed to the RNase active site of PAN2 in the complex and may actually bind nucleosides of a poly(A) RNA rather than ATP, feeding the poly(A)-tail to the active site of the deadenylase and thus increasing the efficiency with which this distributive enzyme degrades oligo(A) RNAs.</text>
</comment>
<comment type="domain">
    <text evidence="1">The pseudokinase domain, the coiled-coil (CC), and C-terminal knob domain (CK) form a structural unit (PKC) that forms an extensive high-affinity interaction surface for PAN2.</text>
</comment>
<comment type="similarity">
    <text evidence="1">Belongs to the protein kinase superfamily. PAN3 family.</text>
</comment>